<accession>Q9T6R8</accession>
<proteinExistence type="inferred from homology"/>
<reference key="1">
    <citation type="submission" date="1999-11" db="EMBL/GenBank/DDBJ databases">
        <title>Genetic relationships of mitochondrial cytochrome b gene among six Korean Rana species.</title>
        <authorList>
            <person name="Lee J.-E."/>
            <person name="Lee H.-Y."/>
            <person name="Yang S.-Y."/>
        </authorList>
    </citation>
    <scope>NUCLEOTIDE SEQUENCE [GENOMIC DNA]</scope>
    <source>
        <strain>Isolate KS102748</strain>
    </source>
</reference>
<feature type="chain" id="PRO_0000061485" description="Cytochrome b">
    <location>
        <begin position="1"/>
        <end position="380"/>
    </location>
</feature>
<feature type="transmembrane region" description="Helical" evidence="2">
    <location>
        <begin position="34"/>
        <end position="54"/>
    </location>
</feature>
<feature type="transmembrane region" description="Helical" evidence="2">
    <location>
        <begin position="78"/>
        <end position="99"/>
    </location>
</feature>
<feature type="transmembrane region" description="Helical" evidence="2">
    <location>
        <begin position="114"/>
        <end position="134"/>
    </location>
</feature>
<feature type="transmembrane region" description="Helical" evidence="2">
    <location>
        <begin position="179"/>
        <end position="199"/>
    </location>
</feature>
<feature type="transmembrane region" description="Helical" evidence="2">
    <location>
        <begin position="227"/>
        <end position="247"/>
    </location>
</feature>
<feature type="transmembrane region" description="Helical" evidence="2">
    <location>
        <begin position="289"/>
        <end position="309"/>
    </location>
</feature>
<feature type="transmembrane region" description="Helical" evidence="2">
    <location>
        <begin position="321"/>
        <end position="341"/>
    </location>
</feature>
<feature type="transmembrane region" description="Helical" evidence="2">
    <location>
        <begin position="348"/>
        <end position="368"/>
    </location>
</feature>
<feature type="binding site" description="axial binding residue" evidence="2">
    <location>
        <position position="84"/>
    </location>
    <ligand>
        <name>heme b</name>
        <dbReference type="ChEBI" id="CHEBI:60344"/>
        <label>b562</label>
    </ligand>
    <ligandPart>
        <name>Fe</name>
        <dbReference type="ChEBI" id="CHEBI:18248"/>
    </ligandPart>
</feature>
<feature type="binding site" description="axial binding residue" evidence="2">
    <location>
        <position position="98"/>
    </location>
    <ligand>
        <name>heme b</name>
        <dbReference type="ChEBI" id="CHEBI:60344"/>
        <label>b566</label>
    </ligand>
    <ligandPart>
        <name>Fe</name>
        <dbReference type="ChEBI" id="CHEBI:18248"/>
    </ligandPart>
</feature>
<feature type="binding site" description="axial binding residue" evidence="2">
    <location>
        <position position="183"/>
    </location>
    <ligand>
        <name>heme b</name>
        <dbReference type="ChEBI" id="CHEBI:60344"/>
        <label>b562</label>
    </ligand>
    <ligandPart>
        <name>Fe</name>
        <dbReference type="ChEBI" id="CHEBI:18248"/>
    </ligandPart>
</feature>
<feature type="binding site" evidence="2">
    <location>
        <position position="202"/>
    </location>
    <ligand>
        <name>a ubiquinone</name>
        <dbReference type="ChEBI" id="CHEBI:16389"/>
    </ligand>
</feature>
<dbReference type="EMBL" id="AF205088">
    <property type="protein sequence ID" value="AAF17087.1"/>
    <property type="molecule type" value="Genomic_DNA"/>
</dbReference>
<dbReference type="RefSeq" id="YP_001122925.1">
    <property type="nucleotide sequence ID" value="NC_009264.1"/>
</dbReference>
<dbReference type="SMR" id="Q9T6R8"/>
<dbReference type="GeneID" id="4955131"/>
<dbReference type="CTD" id="4519"/>
<dbReference type="GO" id="GO:0005743">
    <property type="term" value="C:mitochondrial inner membrane"/>
    <property type="evidence" value="ECO:0007669"/>
    <property type="project" value="UniProtKB-SubCell"/>
</dbReference>
<dbReference type="GO" id="GO:0045275">
    <property type="term" value="C:respiratory chain complex III"/>
    <property type="evidence" value="ECO:0007669"/>
    <property type="project" value="InterPro"/>
</dbReference>
<dbReference type="GO" id="GO:0046872">
    <property type="term" value="F:metal ion binding"/>
    <property type="evidence" value="ECO:0007669"/>
    <property type="project" value="UniProtKB-KW"/>
</dbReference>
<dbReference type="GO" id="GO:0008121">
    <property type="term" value="F:ubiquinol-cytochrome-c reductase activity"/>
    <property type="evidence" value="ECO:0007669"/>
    <property type="project" value="InterPro"/>
</dbReference>
<dbReference type="GO" id="GO:0006122">
    <property type="term" value="P:mitochondrial electron transport, ubiquinol to cytochrome c"/>
    <property type="evidence" value="ECO:0007669"/>
    <property type="project" value="TreeGrafter"/>
</dbReference>
<dbReference type="CDD" id="cd00290">
    <property type="entry name" value="cytochrome_b_C"/>
    <property type="match status" value="1"/>
</dbReference>
<dbReference type="CDD" id="cd00284">
    <property type="entry name" value="Cytochrome_b_N"/>
    <property type="match status" value="1"/>
</dbReference>
<dbReference type="FunFam" id="1.20.810.10:FF:000002">
    <property type="entry name" value="Cytochrome b"/>
    <property type="match status" value="1"/>
</dbReference>
<dbReference type="Gene3D" id="1.20.810.10">
    <property type="entry name" value="Cytochrome Bc1 Complex, Chain C"/>
    <property type="match status" value="1"/>
</dbReference>
<dbReference type="InterPro" id="IPR005798">
    <property type="entry name" value="Cyt_b/b6_C"/>
</dbReference>
<dbReference type="InterPro" id="IPR036150">
    <property type="entry name" value="Cyt_b/b6_C_sf"/>
</dbReference>
<dbReference type="InterPro" id="IPR005797">
    <property type="entry name" value="Cyt_b/b6_N"/>
</dbReference>
<dbReference type="InterPro" id="IPR027387">
    <property type="entry name" value="Cytb/b6-like_sf"/>
</dbReference>
<dbReference type="InterPro" id="IPR030689">
    <property type="entry name" value="Cytochrome_b"/>
</dbReference>
<dbReference type="InterPro" id="IPR048260">
    <property type="entry name" value="Cytochrome_b_C_euk/bac"/>
</dbReference>
<dbReference type="InterPro" id="IPR048259">
    <property type="entry name" value="Cytochrome_b_N_euk/bac"/>
</dbReference>
<dbReference type="InterPro" id="IPR016174">
    <property type="entry name" value="Di-haem_cyt_TM"/>
</dbReference>
<dbReference type="PANTHER" id="PTHR19271">
    <property type="entry name" value="CYTOCHROME B"/>
    <property type="match status" value="1"/>
</dbReference>
<dbReference type="PANTHER" id="PTHR19271:SF16">
    <property type="entry name" value="CYTOCHROME B"/>
    <property type="match status" value="1"/>
</dbReference>
<dbReference type="Pfam" id="PF00032">
    <property type="entry name" value="Cytochrom_B_C"/>
    <property type="match status" value="1"/>
</dbReference>
<dbReference type="Pfam" id="PF00033">
    <property type="entry name" value="Cytochrome_B"/>
    <property type="match status" value="1"/>
</dbReference>
<dbReference type="PIRSF" id="PIRSF038885">
    <property type="entry name" value="COB"/>
    <property type="match status" value="1"/>
</dbReference>
<dbReference type="SUPFAM" id="SSF81648">
    <property type="entry name" value="a domain/subunit of cytochrome bc1 complex (Ubiquinol-cytochrome c reductase)"/>
    <property type="match status" value="1"/>
</dbReference>
<dbReference type="SUPFAM" id="SSF81342">
    <property type="entry name" value="Transmembrane di-heme cytochromes"/>
    <property type="match status" value="1"/>
</dbReference>
<dbReference type="PROSITE" id="PS51003">
    <property type="entry name" value="CYTB_CTER"/>
    <property type="match status" value="1"/>
</dbReference>
<dbReference type="PROSITE" id="PS51002">
    <property type="entry name" value="CYTB_NTER"/>
    <property type="match status" value="1"/>
</dbReference>
<organism>
    <name type="scientific">Pelophylax plancyi</name>
    <name type="common">Korean pond frog</name>
    <name type="synonym">Rana plancyi</name>
    <dbReference type="NCBI Taxonomy" id="109178"/>
    <lineage>
        <taxon>Eukaryota</taxon>
        <taxon>Metazoa</taxon>
        <taxon>Chordata</taxon>
        <taxon>Craniata</taxon>
        <taxon>Vertebrata</taxon>
        <taxon>Euteleostomi</taxon>
        <taxon>Amphibia</taxon>
        <taxon>Batrachia</taxon>
        <taxon>Anura</taxon>
        <taxon>Neobatrachia</taxon>
        <taxon>Ranoidea</taxon>
        <taxon>Ranidae</taxon>
        <taxon>Pelophylax</taxon>
    </lineage>
</organism>
<geneLocation type="mitochondrion"/>
<protein>
    <recommendedName>
        <fullName>Cytochrome b</fullName>
    </recommendedName>
    <alternativeName>
        <fullName>Complex III subunit 3</fullName>
    </alternativeName>
    <alternativeName>
        <fullName>Complex III subunit III</fullName>
    </alternativeName>
    <alternativeName>
        <fullName>Cytochrome b-c1 complex subunit 3</fullName>
    </alternativeName>
    <alternativeName>
        <fullName>Ubiquinol-cytochrome-c reductase complex cytochrome b subunit</fullName>
    </alternativeName>
</protein>
<keyword id="KW-0249">Electron transport</keyword>
<keyword id="KW-0349">Heme</keyword>
<keyword id="KW-0408">Iron</keyword>
<keyword id="KW-0472">Membrane</keyword>
<keyword id="KW-0479">Metal-binding</keyword>
<keyword id="KW-0496">Mitochondrion</keyword>
<keyword id="KW-0999">Mitochondrion inner membrane</keyword>
<keyword id="KW-0679">Respiratory chain</keyword>
<keyword id="KW-0812">Transmembrane</keyword>
<keyword id="KW-1133">Transmembrane helix</keyword>
<keyword id="KW-0813">Transport</keyword>
<keyword id="KW-0830">Ubiquinone</keyword>
<name>CYB_PELPL</name>
<gene>
    <name type="primary">mt-cyb</name>
    <name type="synonym">cob</name>
    <name type="synonym">cytb</name>
    <name type="synonym">mtcyb</name>
</gene>
<evidence type="ECO:0000250" key="1"/>
<evidence type="ECO:0000250" key="2">
    <source>
        <dbReference type="UniProtKB" id="P00157"/>
    </source>
</evidence>
<evidence type="ECO:0000255" key="3">
    <source>
        <dbReference type="PROSITE-ProRule" id="PRU00967"/>
    </source>
</evidence>
<evidence type="ECO:0000255" key="4">
    <source>
        <dbReference type="PROSITE-ProRule" id="PRU00968"/>
    </source>
</evidence>
<evidence type="ECO:0000305" key="5"/>
<comment type="function">
    <text evidence="2">Component of the ubiquinol-cytochrome c reductase complex (complex III or cytochrome b-c1 complex) that is part of the mitochondrial respiratory chain. The b-c1 complex mediates electron transfer from ubiquinol to cytochrome c. Contributes to the generation of a proton gradient across the mitochondrial membrane that is then used for ATP synthesis.</text>
</comment>
<comment type="cofactor">
    <cofactor evidence="2">
        <name>heme b</name>
        <dbReference type="ChEBI" id="CHEBI:60344"/>
    </cofactor>
    <text evidence="2">Binds 2 heme b groups non-covalently.</text>
</comment>
<comment type="subunit">
    <text evidence="2">The cytochrome bc1 complex contains 3 respiratory subunits (MT-CYB, CYC1 and UQCRFS1), 2 core proteins (UQCRC1 and UQCRC2) and probably 6 low-molecular weight proteins.</text>
</comment>
<comment type="subcellular location">
    <subcellularLocation>
        <location evidence="2">Mitochondrion inner membrane</location>
        <topology evidence="2">Multi-pass membrane protein</topology>
    </subcellularLocation>
</comment>
<comment type="miscellaneous">
    <text evidence="1">Heme 1 (or BL or b562) is low-potential and absorbs at about 562 nm, and heme 2 (or BH or b566) is high-potential and absorbs at about 566 nm.</text>
</comment>
<comment type="similarity">
    <text evidence="3 4">Belongs to the cytochrome b family.</text>
</comment>
<comment type="caution">
    <text evidence="5">An expected heme iron ligand His residue was not found at position 197 in this sequence.</text>
</comment>
<comment type="caution">
    <text evidence="2">The full-length protein contains only eight transmembrane helices, not nine as predicted by bioinformatics tools.</text>
</comment>
<sequence>MAPTIRKSHPLLKIINGSFIDLPSPANISAWWNFGSLLGVCLIAQIATGLFLAMHHTADTSLAFSSIAHICRDVNNGWLLRNLHANGASFFFICIYFHIGRGLYYGSYLYKETWNIGVILLFLVMATAFVGYVLPWGQMSFWGATVITNLLSAAPYIGPDLVQWIWGGFSVDNATLTRFFTFHFILPFIIAAASMINLLFLHQTGSSNPTGLNSNLDKVSFHPYFSYKDLLGFVIMLGALASLSTFAPNLLGDPDNFTPANPLVTPPHIKPEWYFLFAYAILRSIPNKLGGVLALLLSIMILFLMPIIHTSKLRSLMFRPIAKTFFWALIANTAILTWIGGQPVEDPFITIGQIASGLYFLIFVLLIPSLGLLENKLLKI</sequence>